<feature type="chain" id="PRO_0000387335" description="tRNA1(Val) (adenine(37)-N6)-methyltransferase">
    <location>
        <begin position="1"/>
        <end position="236"/>
    </location>
</feature>
<accession>A6VKA4</accession>
<gene>
    <name type="ordered locus">Asuc_0019</name>
</gene>
<sequence>MKAGNGFTFKRFHINHDRCAMKVGTDGILLGAWADLANSRSILDLGTGSGLIALMLAQRSDEDVQIHGVERDPAAARQAQENFRASPWAHRLYLHFGDIADFAQKCGQKFDNIVANPPYFAQGVDCRNHARNAARYTAALSHAQWLEIASSLLTEQGTIHFVLPAEQGKTLKQSTALYCVRQCDVISKQGKAAQRVLLSFMKEKKETAYSELTIYDEKNRYTLEFIQLTREFYLKF</sequence>
<proteinExistence type="inferred from homology"/>
<organism>
    <name type="scientific">Actinobacillus succinogenes (strain ATCC 55618 / DSM 22257 / CCUG 43843 / 130Z)</name>
    <dbReference type="NCBI Taxonomy" id="339671"/>
    <lineage>
        <taxon>Bacteria</taxon>
        <taxon>Pseudomonadati</taxon>
        <taxon>Pseudomonadota</taxon>
        <taxon>Gammaproteobacteria</taxon>
        <taxon>Pasteurellales</taxon>
        <taxon>Pasteurellaceae</taxon>
        <taxon>Actinobacillus</taxon>
    </lineage>
</organism>
<evidence type="ECO:0000255" key="1">
    <source>
        <dbReference type="HAMAP-Rule" id="MF_01872"/>
    </source>
</evidence>
<protein>
    <recommendedName>
        <fullName evidence="1">tRNA1(Val) (adenine(37)-N6)-methyltransferase</fullName>
        <ecNumber evidence="1">2.1.1.223</ecNumber>
    </recommendedName>
    <alternativeName>
        <fullName evidence="1">tRNA m6A37 methyltransferase</fullName>
    </alternativeName>
</protein>
<keyword id="KW-0963">Cytoplasm</keyword>
<keyword id="KW-0489">Methyltransferase</keyword>
<keyword id="KW-1185">Reference proteome</keyword>
<keyword id="KW-0949">S-adenosyl-L-methionine</keyword>
<keyword id="KW-0808">Transferase</keyword>
<keyword id="KW-0819">tRNA processing</keyword>
<name>TRMN6_ACTSZ</name>
<reference key="1">
    <citation type="journal article" date="2010" name="BMC Genomics">
        <title>A genomic perspective on the potential of Actinobacillus succinogenes for industrial succinate production.</title>
        <authorList>
            <person name="McKinlay J.B."/>
            <person name="Laivenieks M."/>
            <person name="Schindler B.D."/>
            <person name="McKinlay A.A."/>
            <person name="Siddaramappa S."/>
            <person name="Challacombe J.F."/>
            <person name="Lowry S.R."/>
            <person name="Clum A."/>
            <person name="Lapidus A.L."/>
            <person name="Burkhart K.B."/>
            <person name="Harkins V."/>
            <person name="Vieille C."/>
        </authorList>
    </citation>
    <scope>NUCLEOTIDE SEQUENCE [LARGE SCALE GENOMIC DNA]</scope>
    <source>
        <strain>ATCC 55618 / DSM 22257 / CCUG 43843 / 130Z</strain>
    </source>
</reference>
<comment type="function">
    <text evidence="1">Specifically methylates the adenine in position 37 of tRNA(1)(Val) (anticodon cmo5UAC).</text>
</comment>
<comment type="catalytic activity">
    <reaction evidence="1">
        <text>adenosine(37) in tRNA1(Val) + S-adenosyl-L-methionine = N(6)-methyladenosine(37) in tRNA1(Val) + S-adenosyl-L-homocysteine + H(+)</text>
        <dbReference type="Rhea" id="RHEA:43160"/>
        <dbReference type="Rhea" id="RHEA-COMP:10369"/>
        <dbReference type="Rhea" id="RHEA-COMP:10370"/>
        <dbReference type="ChEBI" id="CHEBI:15378"/>
        <dbReference type="ChEBI" id="CHEBI:57856"/>
        <dbReference type="ChEBI" id="CHEBI:59789"/>
        <dbReference type="ChEBI" id="CHEBI:74411"/>
        <dbReference type="ChEBI" id="CHEBI:74449"/>
        <dbReference type="EC" id="2.1.1.223"/>
    </reaction>
</comment>
<comment type="subcellular location">
    <subcellularLocation>
        <location evidence="1">Cytoplasm</location>
    </subcellularLocation>
</comment>
<comment type="similarity">
    <text evidence="1">Belongs to the methyltransferase superfamily. tRNA (adenine-N(6)-)-methyltransferase family.</text>
</comment>
<dbReference type="EC" id="2.1.1.223" evidence="1"/>
<dbReference type="EMBL" id="CP000746">
    <property type="protein sequence ID" value="ABR73401.1"/>
    <property type="molecule type" value="Genomic_DNA"/>
</dbReference>
<dbReference type="RefSeq" id="WP_011978677.1">
    <property type="nucleotide sequence ID" value="NC_009655.1"/>
</dbReference>
<dbReference type="SMR" id="A6VKA4"/>
<dbReference type="STRING" id="339671.Asuc_0019"/>
<dbReference type="KEGG" id="asu:Asuc_0019"/>
<dbReference type="eggNOG" id="COG4123">
    <property type="taxonomic scope" value="Bacteria"/>
</dbReference>
<dbReference type="HOGENOM" id="CLU_061983_0_0_6"/>
<dbReference type="OrthoDB" id="5383291at2"/>
<dbReference type="Proteomes" id="UP000001114">
    <property type="component" value="Chromosome"/>
</dbReference>
<dbReference type="GO" id="GO:0005737">
    <property type="term" value="C:cytoplasm"/>
    <property type="evidence" value="ECO:0007669"/>
    <property type="project" value="UniProtKB-SubCell"/>
</dbReference>
<dbReference type="GO" id="GO:0003676">
    <property type="term" value="F:nucleic acid binding"/>
    <property type="evidence" value="ECO:0007669"/>
    <property type="project" value="InterPro"/>
</dbReference>
<dbReference type="GO" id="GO:0016430">
    <property type="term" value="F:tRNA (adenine-N6)-methyltransferase activity"/>
    <property type="evidence" value="ECO:0007669"/>
    <property type="project" value="UniProtKB-UniRule"/>
</dbReference>
<dbReference type="GO" id="GO:0032259">
    <property type="term" value="P:methylation"/>
    <property type="evidence" value="ECO:0007669"/>
    <property type="project" value="UniProtKB-KW"/>
</dbReference>
<dbReference type="GO" id="GO:0008033">
    <property type="term" value="P:tRNA processing"/>
    <property type="evidence" value="ECO:0007669"/>
    <property type="project" value="UniProtKB-UniRule"/>
</dbReference>
<dbReference type="CDD" id="cd02440">
    <property type="entry name" value="AdoMet_MTases"/>
    <property type="match status" value="1"/>
</dbReference>
<dbReference type="Gene3D" id="3.40.50.150">
    <property type="entry name" value="Vaccinia Virus protein VP39"/>
    <property type="match status" value="1"/>
</dbReference>
<dbReference type="HAMAP" id="MF_01872">
    <property type="entry name" value="tRNA_methyltr_YfiC"/>
    <property type="match status" value="1"/>
</dbReference>
<dbReference type="InterPro" id="IPR002052">
    <property type="entry name" value="DNA_methylase_N6_adenine_CS"/>
</dbReference>
<dbReference type="InterPro" id="IPR029063">
    <property type="entry name" value="SAM-dependent_MTases_sf"/>
</dbReference>
<dbReference type="InterPro" id="IPR007848">
    <property type="entry name" value="Small_mtfrase_dom"/>
</dbReference>
<dbReference type="InterPro" id="IPR050210">
    <property type="entry name" value="tRNA_Adenine-N(6)_MTase"/>
</dbReference>
<dbReference type="InterPro" id="IPR022882">
    <property type="entry name" value="tRNA_adenine-N6_MeTrfase"/>
</dbReference>
<dbReference type="PANTHER" id="PTHR47739">
    <property type="entry name" value="TRNA1(VAL) (ADENINE(37)-N6)-METHYLTRANSFERASE"/>
    <property type="match status" value="1"/>
</dbReference>
<dbReference type="PANTHER" id="PTHR47739:SF1">
    <property type="entry name" value="TRNA1(VAL) (ADENINE(37)-N6)-METHYLTRANSFERASE"/>
    <property type="match status" value="1"/>
</dbReference>
<dbReference type="Pfam" id="PF05175">
    <property type="entry name" value="MTS"/>
    <property type="match status" value="1"/>
</dbReference>
<dbReference type="PRINTS" id="PR00507">
    <property type="entry name" value="N12N6MTFRASE"/>
</dbReference>
<dbReference type="SUPFAM" id="SSF53335">
    <property type="entry name" value="S-adenosyl-L-methionine-dependent methyltransferases"/>
    <property type="match status" value="1"/>
</dbReference>
<dbReference type="PROSITE" id="PS00092">
    <property type="entry name" value="N6_MTASE"/>
    <property type="match status" value="1"/>
</dbReference>